<comment type="function">
    <text evidence="1">Beta-glucanases participate in the metabolism of beta-glucan, the main structural component of the cell wall. It could also function biosynthetically as a transglycosylase (By similarity).</text>
</comment>
<comment type="catalytic activity">
    <reaction>
        <text>Successive hydrolysis of beta-D-glucose units from the non-reducing ends of (1-&gt;3)-beta-D-glucans, releasing alpha-glucose.</text>
        <dbReference type="EC" id="3.2.1.58"/>
    </reaction>
</comment>
<comment type="subcellular location">
    <subcellularLocation>
        <location evidence="3">Secreted</location>
    </subcellularLocation>
</comment>
<comment type="similarity">
    <text evidence="3">Belongs to the glycosyl hydrolase 5 (cellulase A) family.</text>
</comment>
<dbReference type="EC" id="3.2.1.58"/>
<dbReference type="EMBL" id="AJ222862">
    <property type="protein sequence ID" value="CAA11018.1"/>
    <property type="molecule type" value="Genomic_DNA"/>
</dbReference>
<dbReference type="SMR" id="O93983"/>
<dbReference type="CAZy" id="GH5">
    <property type="family name" value="Glycoside Hydrolase Family 5"/>
</dbReference>
<dbReference type="GO" id="GO:0009986">
    <property type="term" value="C:cell surface"/>
    <property type="evidence" value="ECO:0007669"/>
    <property type="project" value="TreeGrafter"/>
</dbReference>
<dbReference type="GO" id="GO:0005576">
    <property type="term" value="C:extracellular region"/>
    <property type="evidence" value="ECO:0007669"/>
    <property type="project" value="UniProtKB-SubCell"/>
</dbReference>
<dbReference type="GO" id="GO:0004338">
    <property type="term" value="F:glucan exo-1,3-beta-glucosidase activity"/>
    <property type="evidence" value="ECO:0007669"/>
    <property type="project" value="UniProtKB-EC"/>
</dbReference>
<dbReference type="GO" id="GO:0071555">
    <property type="term" value="P:cell wall organization"/>
    <property type="evidence" value="ECO:0007669"/>
    <property type="project" value="UniProtKB-KW"/>
</dbReference>
<dbReference type="GO" id="GO:0009251">
    <property type="term" value="P:glucan catabolic process"/>
    <property type="evidence" value="ECO:0007669"/>
    <property type="project" value="TreeGrafter"/>
</dbReference>
<dbReference type="FunFam" id="3.20.20.80:FF:000033">
    <property type="entry name" value="Glucan 1,3-beta-glucosidase A"/>
    <property type="match status" value="1"/>
</dbReference>
<dbReference type="Gene3D" id="3.20.20.80">
    <property type="entry name" value="Glycosidases"/>
    <property type="match status" value="1"/>
</dbReference>
<dbReference type="InterPro" id="IPR001547">
    <property type="entry name" value="Glyco_hydro_5"/>
</dbReference>
<dbReference type="InterPro" id="IPR018087">
    <property type="entry name" value="Glyco_hydro_5_CS"/>
</dbReference>
<dbReference type="InterPro" id="IPR017853">
    <property type="entry name" value="Glycoside_hydrolase_SF"/>
</dbReference>
<dbReference type="InterPro" id="IPR050386">
    <property type="entry name" value="Glycosyl_hydrolase_5"/>
</dbReference>
<dbReference type="PANTHER" id="PTHR31297:SF1">
    <property type="entry name" value="GLUCAN 1,3-BETA-GLUCOSIDASE I_II-RELATED"/>
    <property type="match status" value="1"/>
</dbReference>
<dbReference type="PANTHER" id="PTHR31297">
    <property type="entry name" value="GLUCAN ENDO-1,6-BETA-GLUCOSIDASE B"/>
    <property type="match status" value="1"/>
</dbReference>
<dbReference type="Pfam" id="PF00150">
    <property type="entry name" value="Cellulase"/>
    <property type="match status" value="1"/>
</dbReference>
<dbReference type="SUPFAM" id="SSF51445">
    <property type="entry name" value="(Trans)glycosidases"/>
    <property type="match status" value="1"/>
</dbReference>
<dbReference type="PROSITE" id="PS00659">
    <property type="entry name" value="GLYCOSYL_HYDROL_F5"/>
    <property type="match status" value="1"/>
</dbReference>
<evidence type="ECO:0000250" key="1"/>
<evidence type="ECO:0000255" key="2"/>
<evidence type="ECO:0000305" key="3"/>
<name>EXG2_WICAO</name>
<feature type="signal peptide" evidence="2">
    <location>
        <begin position="1"/>
        <end position="17"/>
    </location>
</feature>
<feature type="chain" id="PRO_0000007883" description="Glucan 1,3-beta-glucosidase 2">
    <location>
        <begin position="18"/>
        <end position="427"/>
    </location>
</feature>
<feature type="active site" description="Proton donor" evidence="1">
    <location>
        <position position="217"/>
    </location>
</feature>
<feature type="active site" description="Nucleophile" evidence="1">
    <location>
        <position position="316"/>
    </location>
</feature>
<feature type="disulfide bond" evidence="1">
    <location>
        <begin position="299"/>
        <end position="426"/>
    </location>
</feature>
<feature type="disulfide bond" evidence="1">
    <location>
        <begin position="324"/>
        <end position="355"/>
    </location>
</feature>
<reference key="1">
    <citation type="submission" date="1997-12" db="EMBL/GenBank/DDBJ databases">
        <title>Preliminary study of exo-beta-1,3-glucanase encoding genes in relation to the protective activity of Pichia anomala (strain K) against Botrytis cinerea on postharvest apples.</title>
        <authorList>
            <person name="Grevesse C."/>
            <person name="Jijakli M.H."/>
            <person name="Duterme O."/>
            <person name="Colinet D."/>
            <person name="Lepoivre P."/>
        </authorList>
    </citation>
    <scope>NUCLEOTIDE SEQUENCE [GENOMIC DNA]</scope>
    <source>
        <strain>K</strain>
    </source>
</reference>
<sequence length="427" mass="49130">MLISTFIISSLLSIALANPIPSRGGTQFYKRGDYWDYQNDKIRGVNLGGWFVLEPFITPSLFEAFENQGQDVPVDEYHYTKALGKDLAKERLDQHWSSWIVEADFQSIAGAGLNFVRIPIGYWAFQLLDNDPYVQGQESYLDQALEWAKKYDIKVWIDLHGAPGSQNGFDNSGLRDSYEFQNGDNTQVALDVLQYISNKYGGSDYGDVVIGIELLNEPLGSVLDMGKLNDFWQQGYHNLRNTGSSQNVIIHDAFQTWDSFNDKFHTPDYWNVVIDHHHYQVFSPGELSRSVDEHVKVACEWGANSTKENHWNLCGEWSAAMTDCTKWLNGVGRGSRYDQTFDYDPSQNQNYIGSCQGSQDISTWDDDKKSNYRRYIEAQLDAFEKRSGWIFWTWKTETTLEWDFQKLSYYGIFPSPLTSRQYPGQCD</sequence>
<accession>O93983</accession>
<proteinExistence type="inferred from homology"/>
<keyword id="KW-0961">Cell wall biogenesis/degradation</keyword>
<keyword id="KW-1015">Disulfide bond</keyword>
<keyword id="KW-0326">Glycosidase</keyword>
<keyword id="KW-0378">Hydrolase</keyword>
<keyword id="KW-0964">Secreted</keyword>
<keyword id="KW-0732">Signal</keyword>
<keyword id="KW-0865">Zymogen</keyword>
<organism>
    <name type="scientific">Wickerhamomyces anomalus</name>
    <name type="common">Yeast</name>
    <name type="synonym">Hansenula anomala</name>
    <dbReference type="NCBI Taxonomy" id="4927"/>
    <lineage>
        <taxon>Eukaryota</taxon>
        <taxon>Fungi</taxon>
        <taxon>Dikarya</taxon>
        <taxon>Ascomycota</taxon>
        <taxon>Saccharomycotina</taxon>
        <taxon>Saccharomycetes</taxon>
        <taxon>Phaffomycetales</taxon>
        <taxon>Wickerhamomycetaceae</taxon>
        <taxon>Wickerhamomyces</taxon>
    </lineage>
</organism>
<gene>
    <name type="primary">EXG2</name>
</gene>
<protein>
    <recommendedName>
        <fullName>Glucan 1,3-beta-glucosidase 2</fullName>
        <ecNumber>3.2.1.58</ecNumber>
    </recommendedName>
    <alternativeName>
        <fullName>Exo-1,3-beta-glucanase 2</fullName>
    </alternativeName>
</protein>